<proteinExistence type="inferred from homology"/>
<name>OTC_GEOMG</name>
<reference key="1">
    <citation type="journal article" date="2009" name="BMC Microbiol.">
        <title>The genome sequence of Geobacter metallireducens: features of metabolism, physiology and regulation common and dissimilar to Geobacter sulfurreducens.</title>
        <authorList>
            <person name="Aklujkar M."/>
            <person name="Krushkal J."/>
            <person name="DiBartolo G."/>
            <person name="Lapidus A."/>
            <person name="Land M.L."/>
            <person name="Lovley D.R."/>
        </authorList>
    </citation>
    <scope>NUCLEOTIDE SEQUENCE [LARGE SCALE GENOMIC DNA]</scope>
    <source>
        <strain>ATCC 53774 / DSM 7210 / GS-15</strain>
    </source>
</reference>
<accession>Q39Z73</accession>
<comment type="function">
    <text evidence="1">Reversibly catalyzes the transfer of the carbamoyl group from carbamoyl phosphate (CP) to the N(epsilon) atom of ornithine (ORN) to produce L-citrulline.</text>
</comment>
<comment type="catalytic activity">
    <reaction evidence="2">
        <text>carbamoyl phosphate + L-ornithine = L-citrulline + phosphate + H(+)</text>
        <dbReference type="Rhea" id="RHEA:19513"/>
        <dbReference type="ChEBI" id="CHEBI:15378"/>
        <dbReference type="ChEBI" id="CHEBI:43474"/>
        <dbReference type="ChEBI" id="CHEBI:46911"/>
        <dbReference type="ChEBI" id="CHEBI:57743"/>
        <dbReference type="ChEBI" id="CHEBI:58228"/>
        <dbReference type="EC" id="2.1.3.3"/>
    </reaction>
</comment>
<comment type="pathway">
    <text evidence="2">Amino-acid biosynthesis; L-arginine biosynthesis; L-arginine from L-ornithine and carbamoyl phosphate: step 1/3.</text>
</comment>
<comment type="subcellular location">
    <subcellularLocation>
        <location evidence="2">Cytoplasm</location>
    </subcellularLocation>
</comment>
<comment type="similarity">
    <text evidence="2">Belongs to the aspartate/ornithine carbamoyltransferase superfamily. OTCase family.</text>
</comment>
<protein>
    <recommendedName>
        <fullName evidence="2">Ornithine carbamoyltransferase</fullName>
        <shortName evidence="2">OTCase</shortName>
        <ecNumber evidence="2">2.1.3.3</ecNumber>
    </recommendedName>
</protein>
<keyword id="KW-0028">Amino-acid biosynthesis</keyword>
<keyword id="KW-0055">Arginine biosynthesis</keyword>
<keyword id="KW-0963">Cytoplasm</keyword>
<keyword id="KW-1185">Reference proteome</keyword>
<keyword id="KW-0808">Transferase</keyword>
<organism>
    <name type="scientific">Geobacter metallireducens (strain ATCC 53774 / DSM 7210 / GS-15)</name>
    <dbReference type="NCBI Taxonomy" id="269799"/>
    <lineage>
        <taxon>Bacteria</taxon>
        <taxon>Pseudomonadati</taxon>
        <taxon>Thermodesulfobacteriota</taxon>
        <taxon>Desulfuromonadia</taxon>
        <taxon>Geobacterales</taxon>
        <taxon>Geobacteraceae</taxon>
        <taxon>Geobacter</taxon>
    </lineage>
</organism>
<dbReference type="EC" id="2.1.3.3" evidence="2"/>
<dbReference type="EMBL" id="CP000148">
    <property type="protein sequence ID" value="ABB30451.1"/>
    <property type="molecule type" value="Genomic_DNA"/>
</dbReference>
<dbReference type="RefSeq" id="WP_004512794.1">
    <property type="nucleotide sequence ID" value="NC_007517.1"/>
</dbReference>
<dbReference type="SMR" id="Q39Z73"/>
<dbReference type="STRING" id="269799.Gmet_0205"/>
<dbReference type="KEGG" id="gme:Gmet_0205"/>
<dbReference type="eggNOG" id="COG0078">
    <property type="taxonomic scope" value="Bacteria"/>
</dbReference>
<dbReference type="HOGENOM" id="CLU_043846_3_2_7"/>
<dbReference type="UniPathway" id="UPA00068">
    <property type="reaction ID" value="UER00112"/>
</dbReference>
<dbReference type="Proteomes" id="UP000007073">
    <property type="component" value="Chromosome"/>
</dbReference>
<dbReference type="GO" id="GO:0005737">
    <property type="term" value="C:cytoplasm"/>
    <property type="evidence" value="ECO:0007669"/>
    <property type="project" value="UniProtKB-SubCell"/>
</dbReference>
<dbReference type="GO" id="GO:0016597">
    <property type="term" value="F:amino acid binding"/>
    <property type="evidence" value="ECO:0007669"/>
    <property type="project" value="InterPro"/>
</dbReference>
<dbReference type="GO" id="GO:0004585">
    <property type="term" value="F:ornithine carbamoyltransferase activity"/>
    <property type="evidence" value="ECO:0007669"/>
    <property type="project" value="UniProtKB-UniRule"/>
</dbReference>
<dbReference type="GO" id="GO:0042450">
    <property type="term" value="P:arginine biosynthetic process via ornithine"/>
    <property type="evidence" value="ECO:0007669"/>
    <property type="project" value="TreeGrafter"/>
</dbReference>
<dbReference type="GO" id="GO:0019240">
    <property type="term" value="P:citrulline biosynthetic process"/>
    <property type="evidence" value="ECO:0007669"/>
    <property type="project" value="TreeGrafter"/>
</dbReference>
<dbReference type="GO" id="GO:0006526">
    <property type="term" value="P:L-arginine biosynthetic process"/>
    <property type="evidence" value="ECO:0007669"/>
    <property type="project" value="UniProtKB-UniRule"/>
</dbReference>
<dbReference type="FunFam" id="3.40.50.1370:FF:000008">
    <property type="entry name" value="Ornithine carbamoyltransferase"/>
    <property type="match status" value="1"/>
</dbReference>
<dbReference type="Gene3D" id="3.40.50.1370">
    <property type="entry name" value="Aspartate/ornithine carbamoyltransferase"/>
    <property type="match status" value="2"/>
</dbReference>
<dbReference type="HAMAP" id="MF_01109">
    <property type="entry name" value="OTCase"/>
    <property type="match status" value="1"/>
</dbReference>
<dbReference type="InterPro" id="IPR006132">
    <property type="entry name" value="Asp/Orn_carbamoyltranf_P-bd"/>
</dbReference>
<dbReference type="InterPro" id="IPR006130">
    <property type="entry name" value="Asp/Orn_carbamoylTrfase"/>
</dbReference>
<dbReference type="InterPro" id="IPR036901">
    <property type="entry name" value="Asp/Orn_carbamoylTrfase_sf"/>
</dbReference>
<dbReference type="InterPro" id="IPR006131">
    <property type="entry name" value="Asp_carbamoyltransf_Asp/Orn-bd"/>
</dbReference>
<dbReference type="InterPro" id="IPR002292">
    <property type="entry name" value="Orn/put_carbamltrans"/>
</dbReference>
<dbReference type="InterPro" id="IPR024904">
    <property type="entry name" value="OTCase_ArgI"/>
</dbReference>
<dbReference type="NCBIfam" id="TIGR00658">
    <property type="entry name" value="orni_carb_tr"/>
    <property type="match status" value="1"/>
</dbReference>
<dbReference type="NCBIfam" id="NF001986">
    <property type="entry name" value="PRK00779.1"/>
    <property type="match status" value="1"/>
</dbReference>
<dbReference type="PANTHER" id="PTHR45753">
    <property type="entry name" value="ORNITHINE CARBAMOYLTRANSFERASE, MITOCHONDRIAL"/>
    <property type="match status" value="1"/>
</dbReference>
<dbReference type="PANTHER" id="PTHR45753:SF3">
    <property type="entry name" value="ORNITHINE TRANSCARBAMYLASE, MITOCHONDRIAL"/>
    <property type="match status" value="1"/>
</dbReference>
<dbReference type="Pfam" id="PF00185">
    <property type="entry name" value="OTCace"/>
    <property type="match status" value="1"/>
</dbReference>
<dbReference type="Pfam" id="PF02729">
    <property type="entry name" value="OTCace_N"/>
    <property type="match status" value="1"/>
</dbReference>
<dbReference type="PRINTS" id="PR00100">
    <property type="entry name" value="AOTCASE"/>
</dbReference>
<dbReference type="PRINTS" id="PR00102">
    <property type="entry name" value="OTCASE"/>
</dbReference>
<dbReference type="SUPFAM" id="SSF53671">
    <property type="entry name" value="Aspartate/ornithine carbamoyltransferase"/>
    <property type="match status" value="1"/>
</dbReference>
<dbReference type="PROSITE" id="PS00097">
    <property type="entry name" value="CARBAMOYLTRANSFERASE"/>
    <property type="match status" value="1"/>
</dbReference>
<gene>
    <name evidence="2" type="primary">argF</name>
    <name type="ordered locus">Gmet_0205</name>
</gene>
<sequence>MTRHFLALNQYTKEALDALFALTRELKEEQKKGIPHRILEGKSVALIFEKSSTRTRISFEVGVHQLGAHPLFISSATSQMGRGEPVRDTARVMARYCDGVMIRTYGQEIVEEFARYSSVPVINGLTDLFHPCQIMADLFTVIEHKGKYDGLKFAWVGDGNNMANTWIEAAAILGFDLALACPEGYEPDRTVWDWAQKKATSSITITRDPKEAVRDADVVNTDVWASMGQEQEQKVREVAFKGYCLDDDLVALAKPDCMVLHCLPAHRGEEITDSVIEGPRSAVWDEAENRLHVQKAIMASLLK</sequence>
<evidence type="ECO:0000250" key="1"/>
<evidence type="ECO:0000255" key="2">
    <source>
        <dbReference type="HAMAP-Rule" id="MF_01109"/>
    </source>
</evidence>
<feature type="chain" id="PRO_1000065093" description="Ornithine carbamoyltransferase">
    <location>
        <begin position="1"/>
        <end position="303"/>
    </location>
</feature>
<feature type="binding site" evidence="2">
    <location>
        <begin position="52"/>
        <end position="55"/>
    </location>
    <ligand>
        <name>carbamoyl phosphate</name>
        <dbReference type="ChEBI" id="CHEBI:58228"/>
    </ligand>
</feature>
<feature type="binding site" evidence="2">
    <location>
        <position position="79"/>
    </location>
    <ligand>
        <name>carbamoyl phosphate</name>
        <dbReference type="ChEBI" id="CHEBI:58228"/>
    </ligand>
</feature>
<feature type="binding site" evidence="2">
    <location>
        <position position="103"/>
    </location>
    <ligand>
        <name>carbamoyl phosphate</name>
        <dbReference type="ChEBI" id="CHEBI:58228"/>
    </ligand>
</feature>
<feature type="binding site" evidence="2">
    <location>
        <begin position="130"/>
        <end position="133"/>
    </location>
    <ligand>
        <name>carbamoyl phosphate</name>
        <dbReference type="ChEBI" id="CHEBI:58228"/>
    </ligand>
</feature>
<feature type="binding site" evidence="2">
    <location>
        <position position="161"/>
    </location>
    <ligand>
        <name>L-ornithine</name>
        <dbReference type="ChEBI" id="CHEBI:46911"/>
    </ligand>
</feature>
<feature type="binding site" evidence="2">
    <location>
        <position position="222"/>
    </location>
    <ligand>
        <name>L-ornithine</name>
        <dbReference type="ChEBI" id="CHEBI:46911"/>
    </ligand>
</feature>
<feature type="binding site" evidence="2">
    <location>
        <begin position="226"/>
        <end position="227"/>
    </location>
    <ligand>
        <name>L-ornithine</name>
        <dbReference type="ChEBI" id="CHEBI:46911"/>
    </ligand>
</feature>
<feature type="binding site" evidence="2">
    <location>
        <begin position="262"/>
        <end position="263"/>
    </location>
    <ligand>
        <name>carbamoyl phosphate</name>
        <dbReference type="ChEBI" id="CHEBI:58228"/>
    </ligand>
</feature>
<feature type="binding site" evidence="2">
    <location>
        <position position="290"/>
    </location>
    <ligand>
        <name>carbamoyl phosphate</name>
        <dbReference type="ChEBI" id="CHEBI:58228"/>
    </ligand>
</feature>